<gene>
    <name evidence="1" type="primary">rplI</name>
    <name evidence="1" type="synonym">rpl9</name>
    <name type="ordered locus">Synpcc7942_2559</name>
</gene>
<sequence>MAKRVQVVLSQDVYKLGRDGDLVEVAPGYARNFLLPQGLAQPVTRGVLKQVEFRRAREAARLVAEKEAAVARKTALETIGRFVIKKQAGEGESIFGTVTNGDVAEAIQVATTQEVDRREITLPEIHKLGFYKVQVKLHADVTAEVEIQVAAL</sequence>
<accession>Q31K30</accession>
<keyword id="KW-1185">Reference proteome</keyword>
<keyword id="KW-0687">Ribonucleoprotein</keyword>
<keyword id="KW-0689">Ribosomal protein</keyword>
<keyword id="KW-0694">RNA-binding</keyword>
<keyword id="KW-0699">rRNA-binding</keyword>
<protein>
    <recommendedName>
        <fullName evidence="1">Large ribosomal subunit protein bL9</fullName>
    </recommendedName>
    <alternativeName>
        <fullName evidence="2">50S ribosomal protein L9</fullName>
    </alternativeName>
</protein>
<organism>
    <name type="scientific">Synechococcus elongatus (strain ATCC 33912 / PCC 7942 / FACHB-805)</name>
    <name type="common">Anacystis nidulans R2</name>
    <dbReference type="NCBI Taxonomy" id="1140"/>
    <lineage>
        <taxon>Bacteria</taxon>
        <taxon>Bacillati</taxon>
        <taxon>Cyanobacteriota</taxon>
        <taxon>Cyanophyceae</taxon>
        <taxon>Synechococcales</taxon>
        <taxon>Synechococcaceae</taxon>
        <taxon>Synechococcus</taxon>
    </lineage>
</organism>
<evidence type="ECO:0000255" key="1">
    <source>
        <dbReference type="HAMAP-Rule" id="MF_00503"/>
    </source>
</evidence>
<evidence type="ECO:0000305" key="2"/>
<feature type="chain" id="PRO_0000236606" description="Large ribosomal subunit protein bL9">
    <location>
        <begin position="1"/>
        <end position="152"/>
    </location>
</feature>
<proteinExistence type="inferred from homology"/>
<comment type="function">
    <text evidence="1">Binds to the 23S rRNA.</text>
</comment>
<comment type="similarity">
    <text evidence="1">Belongs to the bacterial ribosomal protein bL9 family.</text>
</comment>
<dbReference type="EMBL" id="CP000100">
    <property type="protein sequence ID" value="ABB58589.1"/>
    <property type="molecule type" value="Genomic_DNA"/>
</dbReference>
<dbReference type="RefSeq" id="WP_011243861.1">
    <property type="nucleotide sequence ID" value="NZ_JACJTX010000001.1"/>
</dbReference>
<dbReference type="SMR" id="Q31K30"/>
<dbReference type="STRING" id="1140.Synpcc7942_2559"/>
<dbReference type="PaxDb" id="1140-Synpcc7942_2559"/>
<dbReference type="GeneID" id="72431453"/>
<dbReference type="KEGG" id="syf:Synpcc7942_2559"/>
<dbReference type="eggNOG" id="COG0359">
    <property type="taxonomic scope" value="Bacteria"/>
</dbReference>
<dbReference type="HOGENOM" id="CLU_078938_3_0_3"/>
<dbReference type="OrthoDB" id="9788336at2"/>
<dbReference type="BioCyc" id="SYNEL:SYNPCC7942_2559-MONOMER"/>
<dbReference type="Proteomes" id="UP000889800">
    <property type="component" value="Chromosome"/>
</dbReference>
<dbReference type="GO" id="GO:1990904">
    <property type="term" value="C:ribonucleoprotein complex"/>
    <property type="evidence" value="ECO:0007669"/>
    <property type="project" value="UniProtKB-KW"/>
</dbReference>
<dbReference type="GO" id="GO:0005840">
    <property type="term" value="C:ribosome"/>
    <property type="evidence" value="ECO:0007669"/>
    <property type="project" value="UniProtKB-KW"/>
</dbReference>
<dbReference type="GO" id="GO:0019843">
    <property type="term" value="F:rRNA binding"/>
    <property type="evidence" value="ECO:0007669"/>
    <property type="project" value="UniProtKB-UniRule"/>
</dbReference>
<dbReference type="GO" id="GO:0003735">
    <property type="term" value="F:structural constituent of ribosome"/>
    <property type="evidence" value="ECO:0007669"/>
    <property type="project" value="InterPro"/>
</dbReference>
<dbReference type="GO" id="GO:0006412">
    <property type="term" value="P:translation"/>
    <property type="evidence" value="ECO:0007669"/>
    <property type="project" value="UniProtKB-UniRule"/>
</dbReference>
<dbReference type="Gene3D" id="3.10.430.100">
    <property type="entry name" value="Ribosomal protein L9, C-terminal domain"/>
    <property type="match status" value="1"/>
</dbReference>
<dbReference type="Gene3D" id="3.40.5.10">
    <property type="entry name" value="Ribosomal protein L9, N-terminal domain"/>
    <property type="match status" value="1"/>
</dbReference>
<dbReference type="HAMAP" id="MF_00503">
    <property type="entry name" value="Ribosomal_bL9"/>
    <property type="match status" value="1"/>
</dbReference>
<dbReference type="InterPro" id="IPR000244">
    <property type="entry name" value="Ribosomal_bL9"/>
</dbReference>
<dbReference type="InterPro" id="IPR009027">
    <property type="entry name" value="Ribosomal_bL9/RNase_H1_N"/>
</dbReference>
<dbReference type="InterPro" id="IPR020594">
    <property type="entry name" value="Ribosomal_bL9_bac/chp"/>
</dbReference>
<dbReference type="InterPro" id="IPR020069">
    <property type="entry name" value="Ribosomal_bL9_C"/>
</dbReference>
<dbReference type="InterPro" id="IPR036791">
    <property type="entry name" value="Ribosomal_bL9_C_sf"/>
</dbReference>
<dbReference type="InterPro" id="IPR020070">
    <property type="entry name" value="Ribosomal_bL9_N"/>
</dbReference>
<dbReference type="InterPro" id="IPR036935">
    <property type="entry name" value="Ribosomal_bL9_N_sf"/>
</dbReference>
<dbReference type="NCBIfam" id="TIGR00158">
    <property type="entry name" value="L9"/>
    <property type="match status" value="1"/>
</dbReference>
<dbReference type="PANTHER" id="PTHR21368">
    <property type="entry name" value="50S RIBOSOMAL PROTEIN L9"/>
    <property type="match status" value="1"/>
</dbReference>
<dbReference type="Pfam" id="PF03948">
    <property type="entry name" value="Ribosomal_L9_C"/>
    <property type="match status" value="1"/>
</dbReference>
<dbReference type="Pfam" id="PF01281">
    <property type="entry name" value="Ribosomal_L9_N"/>
    <property type="match status" value="1"/>
</dbReference>
<dbReference type="SUPFAM" id="SSF55658">
    <property type="entry name" value="L9 N-domain-like"/>
    <property type="match status" value="1"/>
</dbReference>
<dbReference type="SUPFAM" id="SSF55653">
    <property type="entry name" value="Ribosomal protein L9 C-domain"/>
    <property type="match status" value="1"/>
</dbReference>
<dbReference type="PROSITE" id="PS00651">
    <property type="entry name" value="RIBOSOMAL_L9"/>
    <property type="match status" value="1"/>
</dbReference>
<name>RL9_SYNE7</name>
<reference key="1">
    <citation type="submission" date="2005-08" db="EMBL/GenBank/DDBJ databases">
        <title>Complete sequence of chromosome 1 of Synechococcus elongatus PCC 7942.</title>
        <authorList>
            <consortium name="US DOE Joint Genome Institute"/>
            <person name="Copeland A."/>
            <person name="Lucas S."/>
            <person name="Lapidus A."/>
            <person name="Barry K."/>
            <person name="Detter J.C."/>
            <person name="Glavina T."/>
            <person name="Hammon N."/>
            <person name="Israni S."/>
            <person name="Pitluck S."/>
            <person name="Schmutz J."/>
            <person name="Larimer F."/>
            <person name="Land M."/>
            <person name="Kyrpides N."/>
            <person name="Lykidis A."/>
            <person name="Golden S."/>
            <person name="Richardson P."/>
        </authorList>
    </citation>
    <scope>NUCLEOTIDE SEQUENCE [LARGE SCALE GENOMIC DNA]</scope>
    <source>
        <strain>ATCC 33912 / PCC 7942 / FACHB-805</strain>
    </source>
</reference>